<comment type="function">
    <text evidence="1 2">Calcium-dependent lectin involved in innate immune defense. Binds mannose residues on the surface of the Gram-negative bacterium A.salmonicida. Shows agglutinating activity towards horse erythrocytes.</text>
</comment>
<comment type="subunit">
    <text evidence="1 2">Forms an oligomeric complex with the C-type lectin 65 kDa subunit.</text>
</comment>
<comment type="subcellular location">
    <subcellularLocation>
        <location evidence="1">Secreted</location>
    </subcellularLocation>
</comment>
<accession>Q9PRY2</accession>
<evidence type="ECO:0000269" key="1">
    <source>
    </source>
</evidence>
<evidence type="ECO:0000269" key="2">
    <source>
    </source>
</evidence>
<evidence type="ECO:0000303" key="3">
    <source>
    </source>
</evidence>
<evidence type="ECO:0000303" key="4">
    <source>
    </source>
</evidence>
<evidence type="ECO:0000305" key="5"/>
<dbReference type="Proteomes" id="UP001318040">
    <property type="component" value="Unplaced"/>
</dbReference>
<dbReference type="GO" id="GO:0005576">
    <property type="term" value="C:extracellular region"/>
    <property type="evidence" value="ECO:0000314"/>
    <property type="project" value="UniProtKB"/>
</dbReference>
<dbReference type="GO" id="GO:0005537">
    <property type="term" value="F:D-mannose binding"/>
    <property type="evidence" value="ECO:0000314"/>
    <property type="project" value="UniProtKB"/>
</dbReference>
<dbReference type="GO" id="GO:0045087">
    <property type="term" value="P:innate immune response"/>
    <property type="evidence" value="ECO:0000314"/>
    <property type="project" value="UniProtKB"/>
</dbReference>
<dbReference type="GO" id="GO:0034120">
    <property type="term" value="P:positive regulation of erythrocyte aggregation"/>
    <property type="evidence" value="ECO:0000314"/>
    <property type="project" value="UniProtKB"/>
</dbReference>
<sequence>XWSCTKGCPDAKQCEAT</sequence>
<name>CLC35_PETMA</name>
<organism>
    <name type="scientific">Petromyzon marinus</name>
    <name type="common">Sea lamprey</name>
    <dbReference type="NCBI Taxonomy" id="7757"/>
    <lineage>
        <taxon>Eukaryota</taxon>
        <taxon>Metazoa</taxon>
        <taxon>Chordata</taxon>
        <taxon>Craniata</taxon>
        <taxon>Vertebrata</taxon>
        <taxon>Cyclostomata</taxon>
        <taxon>Hyperoartia</taxon>
        <taxon>Petromyzontiformes</taxon>
        <taxon>Petromyzontidae</taxon>
        <taxon>Petromyzon</taxon>
    </lineage>
</organism>
<keyword id="KW-0106">Calcium</keyword>
<keyword id="KW-0903">Direct protein sequencing</keyword>
<keyword id="KW-0348">Hemagglutinin</keyword>
<keyword id="KW-0391">Immunity</keyword>
<keyword id="KW-0399">Innate immunity</keyword>
<keyword id="KW-0430">Lectin</keyword>
<keyword id="KW-0465">Mannose-binding</keyword>
<keyword id="KW-0964">Secreted</keyword>
<feature type="chain" id="PRO_0000392631" description="C-type lectin 35 kDa subunit">
    <location>
        <begin position="1"/>
        <end position="17" status="greater than"/>
    </location>
</feature>
<feature type="non-terminal residue" evidence="4">
    <location>
        <position position="17"/>
    </location>
</feature>
<protein>
    <recommendedName>
        <fullName evidence="3">C-type lectin 35 kDa subunit</fullName>
    </recommendedName>
    <alternativeName>
        <fullName evidence="4">C-type lectin 30 kDa subunit</fullName>
    </alternativeName>
</protein>
<reference evidence="5" key="1">
    <citation type="journal article" date="2008" name="Vet. Immunol. Immunopathol.">
        <title>Isolation of mannose-binding C-type lectin from sea lamprey (Petromyzon marinus) plasma and binding to Aeromonas salmonicida.</title>
        <authorList>
            <person name="Ourth D.D."/>
            <person name="Rose W.M."/>
            <person name="Siefkes M.J."/>
        </authorList>
    </citation>
    <scope>PROTEIN SEQUENCE OF 1-11</scope>
    <scope>FUNCTION</scope>
    <scope>SUBUNIT</scope>
    <scope>SUBCELLULAR LOCATION</scope>
    <source>
        <tissue evidence="1">Plasma</tissue>
    </source>
</reference>
<reference evidence="5" key="2">
    <citation type="journal article" date="1994" name="Ann. N. Y. Acad. Sci.">
        <title>Recognition molecules and immunoglobulin domains in invertebrates.</title>
        <authorList>
            <person name="Schluter S.F."/>
            <person name="Schroeder J."/>
            <person name="Wang E."/>
            <person name="Marchalonis J.J."/>
        </authorList>
    </citation>
    <scope>PROTEIN SEQUENCE OF 2-17</scope>
    <scope>FUNCTION</scope>
    <scope>SUBUNIT</scope>
    <source>
        <tissue evidence="2">Egg</tissue>
    </source>
</reference>
<proteinExistence type="evidence at protein level"/>